<accession>Q9NYV7</accession>
<accession>A4D0X2</accession>
<accession>Q502V3</accession>
<accession>Q549U8</accession>
<accession>Q645W1</accession>
<protein>
    <recommendedName>
        <fullName>Taste receptor type 2 member 16</fullName>
        <shortName>T2R16</shortName>
    </recommendedName>
</protein>
<comment type="function">
    <text evidence="2 6">Gustducin-coupled receptor implicated in the perception of bitter compounds in the oral cavity and the gastrointestinal tract. Signals through PLCB2 and the calcium-regulated cation channel TRPM5.</text>
</comment>
<comment type="subunit">
    <text evidence="9">Interacts with RTP3 and RTP4.</text>
</comment>
<comment type="subcellular location">
    <subcellularLocation>
        <location evidence="9">Cell membrane</location>
        <topology evidence="1">Multi-pass membrane protein</topology>
    </subcellularLocation>
</comment>
<comment type="tissue specificity">
    <text evidence="9">Expressed in a subset of gustducin-positive taste receptor cells of the tongue. Expressed in circumvallate papillae and testis (PubMed:16720576).</text>
</comment>
<comment type="polymorphism">
    <text evidence="7 8">Genetic variation in TAS2R16 influences sensitivity to beta-glucopyranoside tasting (BGLPT) [MIM:617956]. Variant Asn-172 results in greater receptor activation in response to bitter beta-glucopyranoside compounds including salicin, arbutin and amygdalin compared to Lys-172 (PubMed:16051168). Variant Lys-172 may influence risk of alcohol dependence (PubMed:16385453).</text>
</comment>
<comment type="miscellaneous">
    <text>Several bitter taste receptors are expressed in a single taste receptor cell.</text>
</comment>
<comment type="miscellaneous">
    <text>Confers bitter perception of salicin to non-taster mice.</text>
</comment>
<comment type="similarity">
    <text evidence="10">Belongs to the G-protein coupled receptor T2R family.</text>
</comment>
<name>T2R16_HUMAN</name>
<gene>
    <name type="primary">TAS2R16</name>
</gene>
<feature type="chain" id="PRO_0000082262" description="Taste receptor type 2 member 16">
    <location>
        <begin position="1"/>
        <end position="291"/>
    </location>
</feature>
<feature type="topological domain" description="Extracellular" evidence="1">
    <location>
        <position position="1"/>
    </location>
</feature>
<feature type="transmembrane region" description="Helical; Name=1" evidence="1">
    <location>
        <begin position="2"/>
        <end position="22"/>
    </location>
</feature>
<feature type="topological domain" description="Cytoplasmic" evidence="1">
    <location>
        <begin position="23"/>
        <end position="41"/>
    </location>
</feature>
<feature type="transmembrane region" description="Helical; Name=2" evidence="1">
    <location>
        <begin position="42"/>
        <end position="62"/>
    </location>
</feature>
<feature type="topological domain" description="Extracellular" evidence="1">
    <location>
        <begin position="63"/>
        <end position="84"/>
    </location>
</feature>
<feature type="transmembrane region" description="Helical; Name=3" evidence="1">
    <location>
        <begin position="85"/>
        <end position="105"/>
    </location>
</feature>
<feature type="topological domain" description="Cytoplasmic" evidence="1">
    <location>
        <begin position="106"/>
        <end position="125"/>
    </location>
</feature>
<feature type="transmembrane region" description="Helical; Name=4" evidence="1">
    <location>
        <begin position="126"/>
        <end position="146"/>
    </location>
</feature>
<feature type="topological domain" description="Extracellular" evidence="1">
    <location>
        <begin position="147"/>
        <end position="182"/>
    </location>
</feature>
<feature type="transmembrane region" description="Helical; Name=5" evidence="1">
    <location>
        <begin position="183"/>
        <end position="203"/>
    </location>
</feature>
<feature type="topological domain" description="Cytoplasmic" evidence="1">
    <location>
        <begin position="204"/>
        <end position="228"/>
    </location>
</feature>
<feature type="transmembrane region" description="Helical; Name=6" evidence="1">
    <location>
        <begin position="229"/>
        <end position="249"/>
    </location>
</feature>
<feature type="topological domain" description="Extracellular" evidence="1">
    <location>
        <begin position="250"/>
        <end position="257"/>
    </location>
</feature>
<feature type="transmembrane region" description="Helical; Name=7" evidence="1">
    <location>
        <begin position="258"/>
        <end position="278"/>
    </location>
</feature>
<feature type="topological domain" description="Cytoplasmic" evidence="1">
    <location>
        <begin position="279"/>
        <end position="291"/>
    </location>
</feature>
<feature type="glycosylation site" description="N-linked (GlcNAc...) asparagine" evidence="1">
    <location>
        <position position="80"/>
    </location>
</feature>
<feature type="glycosylation site" description="N-linked (GlcNAc...) asparagine" evidence="1">
    <location>
        <position position="163"/>
    </location>
</feature>
<feature type="sequence variant" id="VAR_080835" description="In dbSNP:rs28371571." evidence="7">
    <original>V</original>
    <variation>M</variation>
    <location>
        <position position="101"/>
    </location>
</feature>
<feature type="sequence variant" id="VAR_080836" description="In dbSNP:rs28371574." evidence="7">
    <original>I</original>
    <variation>V</variation>
    <location>
        <position position="114"/>
    </location>
</feature>
<feature type="sequence variant" id="VAR_080837" description="In dbSNP:rs28371575." evidence="7">
    <original>L</original>
    <variation>P</variation>
    <location>
        <position position="116"/>
    </location>
</feature>
<feature type="sequence variant" id="VAR_080838" description="In dbSNP:rs28371576." evidence="7">
    <original>P</original>
    <variation>S</variation>
    <location>
        <position position="161"/>
    </location>
</feature>
<feature type="sequence variant" id="VAR_034539" description="Probable risk factor for alcoholism; dbSNP:rs846664." evidence="7 8">
    <original>N</original>
    <variation>K</variation>
    <location>
        <position position="172"/>
    </location>
</feature>
<feature type="sequence variant" id="VAR_080839" description="In dbSNP:rs28371577." evidence="7">
    <original>Q</original>
    <variation>P</variation>
    <location>
        <position position="177"/>
    </location>
</feature>
<feature type="sequence variant" id="VAR_080840" description="In dbSNP:rs28371578." evidence="7">
    <original>N</original>
    <variation>D</variation>
    <location>
        <position position="216"/>
    </location>
</feature>
<feature type="sequence variant" id="VAR_080841" description="In dbSNP:rs28371579." evidence="7">
    <original>A</original>
    <variation>V</variation>
    <location>
        <position position="221"/>
    </location>
</feature>
<feature type="sequence variant" id="VAR_020205" description="In dbSNP:rs860170." evidence="3 4 5 7">
    <original>R</original>
    <variation>H</variation>
    <location>
        <position position="222"/>
    </location>
</feature>
<feature type="sequence variant" id="VAR_080842" description="In dbSNP:rs28371580." evidence="7">
    <original>V</original>
    <variation>M</variation>
    <location>
        <position position="235"/>
    </location>
</feature>
<feature type="sequence variant" id="VAR_080843" description="In dbSNP:rs28371581." evidence="7">
    <original>F</original>
    <variation>V</variation>
    <location>
        <position position="240"/>
    </location>
</feature>
<organism>
    <name type="scientific">Homo sapiens</name>
    <name type="common">Human</name>
    <dbReference type="NCBI Taxonomy" id="9606"/>
    <lineage>
        <taxon>Eukaryota</taxon>
        <taxon>Metazoa</taxon>
        <taxon>Chordata</taxon>
        <taxon>Craniata</taxon>
        <taxon>Vertebrata</taxon>
        <taxon>Euteleostomi</taxon>
        <taxon>Mammalia</taxon>
        <taxon>Eutheria</taxon>
        <taxon>Euarchontoglires</taxon>
        <taxon>Primates</taxon>
        <taxon>Haplorrhini</taxon>
        <taxon>Catarrhini</taxon>
        <taxon>Hominidae</taxon>
        <taxon>Homo</taxon>
    </lineage>
</organism>
<keyword id="KW-1003">Cell membrane</keyword>
<keyword id="KW-0297">G-protein coupled receptor</keyword>
<keyword id="KW-0325">Glycoprotein</keyword>
<keyword id="KW-0472">Membrane</keyword>
<keyword id="KW-0675">Receptor</keyword>
<keyword id="KW-1185">Reference proteome</keyword>
<keyword id="KW-0716">Sensory transduction</keyword>
<keyword id="KW-0919">Taste</keyword>
<keyword id="KW-0807">Transducer</keyword>
<keyword id="KW-0812">Transmembrane</keyword>
<keyword id="KW-1133">Transmembrane helix</keyword>
<reference key="1">
    <citation type="journal article" date="2000" name="Cell">
        <title>A novel family of mammalian taste receptors.</title>
        <authorList>
            <person name="Adler E."/>
            <person name="Hoon M.A."/>
            <person name="Mueller K.L."/>
            <person name="Chandrashekar J."/>
            <person name="Ryba N.J.P."/>
            <person name="Zuker C.S."/>
        </authorList>
    </citation>
    <scope>NUCLEOTIDE SEQUENCE [GENOMIC DNA]</scope>
    <scope>TOPOLOGY</scope>
</reference>
<reference key="2">
    <citation type="journal article" date="2005" name="Mol. Biol. Evol.">
        <title>Evolution of bitter taste receptors in humans and apes.</title>
        <authorList>
            <person name="Fischer A."/>
            <person name="Gilad Y."/>
            <person name="Man O."/>
            <person name="Paeaebo S."/>
        </authorList>
    </citation>
    <scope>NUCLEOTIDE SEQUENCE [GENOMIC DNA]</scope>
    <scope>VARIANT HIS-222</scope>
</reference>
<reference key="3">
    <citation type="journal article" date="2003" name="Nature">
        <title>The DNA sequence of human chromosome 7.</title>
        <authorList>
            <person name="Hillier L.W."/>
            <person name="Fulton R.S."/>
            <person name="Fulton L.A."/>
            <person name="Graves T.A."/>
            <person name="Pepin K.H."/>
            <person name="Wagner-McPherson C."/>
            <person name="Layman D."/>
            <person name="Maas J."/>
            <person name="Jaeger S."/>
            <person name="Walker R."/>
            <person name="Wylie K."/>
            <person name="Sekhon M."/>
            <person name="Becker M.C."/>
            <person name="O'Laughlin M.D."/>
            <person name="Schaller M.E."/>
            <person name="Fewell G.A."/>
            <person name="Delehaunty K.D."/>
            <person name="Miner T.L."/>
            <person name="Nash W.E."/>
            <person name="Cordes M."/>
            <person name="Du H."/>
            <person name="Sun H."/>
            <person name="Edwards J."/>
            <person name="Bradshaw-Cordum H."/>
            <person name="Ali J."/>
            <person name="Andrews S."/>
            <person name="Isak A."/>
            <person name="Vanbrunt A."/>
            <person name="Nguyen C."/>
            <person name="Du F."/>
            <person name="Lamar B."/>
            <person name="Courtney L."/>
            <person name="Kalicki J."/>
            <person name="Ozersky P."/>
            <person name="Bielicki L."/>
            <person name="Scott K."/>
            <person name="Holmes A."/>
            <person name="Harkins R."/>
            <person name="Harris A."/>
            <person name="Strong C.M."/>
            <person name="Hou S."/>
            <person name="Tomlinson C."/>
            <person name="Dauphin-Kohlberg S."/>
            <person name="Kozlowicz-Reilly A."/>
            <person name="Leonard S."/>
            <person name="Rohlfing T."/>
            <person name="Rock S.M."/>
            <person name="Tin-Wollam A.-M."/>
            <person name="Abbott A."/>
            <person name="Minx P."/>
            <person name="Maupin R."/>
            <person name="Strowmatt C."/>
            <person name="Latreille P."/>
            <person name="Miller N."/>
            <person name="Johnson D."/>
            <person name="Murray J."/>
            <person name="Woessner J.P."/>
            <person name="Wendl M.C."/>
            <person name="Yang S.-P."/>
            <person name="Schultz B.R."/>
            <person name="Wallis J.W."/>
            <person name="Spieth J."/>
            <person name="Bieri T.A."/>
            <person name="Nelson J.O."/>
            <person name="Berkowicz N."/>
            <person name="Wohldmann P.E."/>
            <person name="Cook L.L."/>
            <person name="Hickenbotham M.T."/>
            <person name="Eldred J."/>
            <person name="Williams D."/>
            <person name="Bedell J.A."/>
            <person name="Mardis E.R."/>
            <person name="Clifton S.W."/>
            <person name="Chissoe S.L."/>
            <person name="Marra M.A."/>
            <person name="Raymond C."/>
            <person name="Haugen E."/>
            <person name="Gillett W."/>
            <person name="Zhou Y."/>
            <person name="James R."/>
            <person name="Phelps K."/>
            <person name="Iadanoto S."/>
            <person name="Bubb K."/>
            <person name="Simms E."/>
            <person name="Levy R."/>
            <person name="Clendenning J."/>
            <person name="Kaul R."/>
            <person name="Kent W.J."/>
            <person name="Furey T.S."/>
            <person name="Baertsch R.A."/>
            <person name="Brent M.R."/>
            <person name="Keibler E."/>
            <person name="Flicek P."/>
            <person name="Bork P."/>
            <person name="Suyama M."/>
            <person name="Bailey J.A."/>
            <person name="Portnoy M.E."/>
            <person name="Torrents D."/>
            <person name="Chinwalla A.T."/>
            <person name="Gish W.R."/>
            <person name="Eddy S.R."/>
            <person name="McPherson J.D."/>
            <person name="Olson M.V."/>
            <person name="Eichler E.E."/>
            <person name="Green E.D."/>
            <person name="Waterston R.H."/>
            <person name="Wilson R.K."/>
        </authorList>
    </citation>
    <scope>NUCLEOTIDE SEQUENCE [LARGE SCALE GENOMIC DNA]</scope>
</reference>
<reference key="4">
    <citation type="journal article" date="2003" name="Science">
        <title>Human chromosome 7: DNA sequence and biology.</title>
        <authorList>
            <person name="Scherer S.W."/>
            <person name="Cheung J."/>
            <person name="MacDonald J.R."/>
            <person name="Osborne L.R."/>
            <person name="Nakabayashi K."/>
            <person name="Herbrick J.-A."/>
            <person name="Carson A.R."/>
            <person name="Parker-Katiraee L."/>
            <person name="Skaug J."/>
            <person name="Khaja R."/>
            <person name="Zhang J."/>
            <person name="Hudek A.K."/>
            <person name="Li M."/>
            <person name="Haddad M."/>
            <person name="Duggan G.E."/>
            <person name="Fernandez B.A."/>
            <person name="Kanematsu E."/>
            <person name="Gentles S."/>
            <person name="Christopoulos C.C."/>
            <person name="Choufani S."/>
            <person name="Kwasnicka D."/>
            <person name="Zheng X.H."/>
            <person name="Lai Z."/>
            <person name="Nusskern D.R."/>
            <person name="Zhang Q."/>
            <person name="Gu Z."/>
            <person name="Lu F."/>
            <person name="Zeesman S."/>
            <person name="Nowaczyk M.J."/>
            <person name="Teshima I."/>
            <person name="Chitayat D."/>
            <person name="Shuman C."/>
            <person name="Weksberg R."/>
            <person name="Zackai E.H."/>
            <person name="Grebe T.A."/>
            <person name="Cox S.R."/>
            <person name="Kirkpatrick S.J."/>
            <person name="Rahman N."/>
            <person name="Friedman J.M."/>
            <person name="Heng H.H.Q."/>
            <person name="Pelicci P.G."/>
            <person name="Lo-Coco F."/>
            <person name="Belloni E."/>
            <person name="Shaffer L.G."/>
            <person name="Pober B."/>
            <person name="Morton C.C."/>
            <person name="Gusella J.F."/>
            <person name="Bruns G.A.P."/>
            <person name="Korf B.R."/>
            <person name="Quade B.J."/>
            <person name="Ligon A.H."/>
            <person name="Ferguson H."/>
            <person name="Higgins A.W."/>
            <person name="Leach N.T."/>
            <person name="Herrick S.R."/>
            <person name="Lemyre E."/>
            <person name="Farra C.G."/>
            <person name="Kim H.-G."/>
            <person name="Summers A.M."/>
            <person name="Gripp K.W."/>
            <person name="Roberts W."/>
            <person name="Szatmari P."/>
            <person name="Winsor E.J.T."/>
            <person name="Grzeschik K.-H."/>
            <person name="Teebi A."/>
            <person name="Minassian B.A."/>
            <person name="Kere J."/>
            <person name="Armengol L."/>
            <person name="Pujana M.A."/>
            <person name="Estivill X."/>
            <person name="Wilson M.D."/>
            <person name="Koop B.F."/>
            <person name="Tosi S."/>
            <person name="Moore G.E."/>
            <person name="Boright A.P."/>
            <person name="Zlotorynski E."/>
            <person name="Kerem B."/>
            <person name="Kroisel P.M."/>
            <person name="Petek E."/>
            <person name="Oscier D.G."/>
            <person name="Mould S.J."/>
            <person name="Doehner H."/>
            <person name="Doehner K."/>
            <person name="Rommens J.M."/>
            <person name="Vincent J.B."/>
            <person name="Venter J.C."/>
            <person name="Li P.W."/>
            <person name="Mural R.J."/>
            <person name="Adams M.D."/>
            <person name="Tsui L.-C."/>
        </authorList>
    </citation>
    <scope>NUCLEOTIDE SEQUENCE [LARGE SCALE GENOMIC DNA]</scope>
    <scope>VARIANT HIS-222</scope>
</reference>
<reference key="5">
    <citation type="journal article" date="2004" name="Genome Res.">
        <title>The status, quality, and expansion of the NIH full-length cDNA project: the Mammalian Gene Collection (MGC).</title>
        <authorList>
            <consortium name="The MGC Project Team"/>
        </authorList>
    </citation>
    <scope>NUCLEOTIDE SEQUENCE [LARGE SCALE MRNA]</scope>
    <scope>VARIANT HIS-222</scope>
</reference>
<reference key="6">
    <citation type="journal article" date="2000" name="Cell">
        <title>T2Rs function as bitter taste receptors.</title>
        <authorList>
            <person name="Chandrashekar J."/>
            <person name="Mueller K.L."/>
            <person name="Hoon M.A."/>
            <person name="Adler E."/>
            <person name="Feng L."/>
            <person name="Guo W."/>
            <person name="Zuker C.S."/>
            <person name="Ryba N.J.P."/>
        </authorList>
    </citation>
    <scope>CHARACTERIZATION</scope>
</reference>
<reference key="7">
    <citation type="journal article" date="2002" name="Nat. Genet.">
        <title>The human TAS2R16 receptor mediates bitter taste in response to beta-glucopyranosides.</title>
        <authorList>
            <person name="Bufe B."/>
            <person name="Hofmann T."/>
            <person name="Krautwurst D."/>
            <person name="Raguse J.-D."/>
            <person name="Meyerhof W."/>
        </authorList>
    </citation>
    <scope>FUNCTION</scope>
</reference>
<reference key="8">
    <citation type="journal article" date="2005" name="Nature">
        <title>The receptors and coding logic for bitter taste.</title>
        <authorList>
            <person name="Mueller K.L."/>
            <person name="Hoon M.A."/>
            <person name="Erlenbach I."/>
            <person name="Chandrashekar J."/>
            <person name="Zuker C.S."/>
            <person name="Ryba N.J."/>
        </authorList>
    </citation>
    <scope>FUNCTION</scope>
</reference>
<reference key="9">
    <citation type="journal article" date="2002" name="Curr. Opin. Neurobiol.">
        <title>Receptors for bitter and sweet taste.</title>
        <authorList>
            <person name="Montmayeur J.-P."/>
            <person name="Matsunami H."/>
        </authorList>
    </citation>
    <scope>REVIEW</scope>
</reference>
<reference key="10">
    <citation type="journal article" date="2002" name="J. Biol. Chem.">
        <title>Molecular mechanisms of bitter and sweet taste transduction.</title>
        <authorList>
            <person name="Margolskee R.F."/>
        </authorList>
    </citation>
    <scope>REVIEW</scope>
</reference>
<reference key="11">
    <citation type="journal article" date="2003" name="Cell">
        <title>Coding of sweet, bitter, and umami tastes: different receptor cells sharing similar signaling pathways.</title>
        <authorList>
            <person name="Zhang Y."/>
            <person name="Hoon M.A."/>
            <person name="Chandrashekar J."/>
            <person name="Mueller K.L."/>
            <person name="Cook B."/>
            <person name="Wu D."/>
            <person name="Zuker C.S."/>
            <person name="Ryba N.J."/>
        </authorList>
    </citation>
    <scope>REVIEW</scope>
</reference>
<reference key="12">
    <citation type="journal article" date="2005" name="Curr. Biol.">
        <title>Positive selection on a high-sensitivity allele of the human bitter-taste receptor TAS2R16.</title>
        <authorList>
            <person name="Soranzo N."/>
            <person name="Bufe B."/>
            <person name="Sabeti P.C."/>
            <person name="Wilson J.F."/>
            <person name="Weale M.E."/>
            <person name="Marguerie R."/>
            <person name="Meyerhof W."/>
            <person name="Goldstein D.B."/>
        </authorList>
    </citation>
    <scope>POLYMORPHISM</scope>
    <scope>INVOLVEMENT IN BETA-GLUCOPYRANOSIDE TASTING</scope>
    <scope>VARIANTS MET-101; VAL-114; PRO-116; SER-161; LYS-172; PRO-177; ASP-216; VAL-221; HIS-222; MET-235 AND VAL-240</scope>
</reference>
<reference key="13">
    <citation type="journal article" date="2006" name="J. Biol. Chem.">
        <title>Members of RTP and REEP gene families influence functional bitter taste receptor expression.</title>
        <authorList>
            <person name="Behrens M."/>
            <person name="Bartelt J."/>
            <person name="Reichling C."/>
            <person name="Winnig M."/>
            <person name="Kuhn C."/>
            <person name="Meyerhof W."/>
        </authorList>
    </citation>
    <scope>INTERACTION WITH RTP3 AND RTP4</scope>
    <scope>SUBCELLULAR LOCATION</scope>
    <scope>TISSUE SPECIFICITY</scope>
</reference>
<reference key="14">
    <citation type="journal article" date="2006" name="Am. J. Hum. Genet.">
        <title>Functional variant in a bitter-taste receptor (hTAS2R16) influences risk of alcohol dependence.</title>
        <authorList>
            <person name="Hinrichs A.L."/>
            <person name="Wang J.C."/>
            <person name="Bufe B."/>
            <person name="Kwon J.M."/>
            <person name="Budde J."/>
            <person name="Allen R."/>
            <person name="Bertelsen S."/>
            <person name="Evans W."/>
            <person name="Dick D."/>
            <person name="Rice J."/>
            <person name="Foroud T."/>
            <person name="Nurnberger J."/>
            <person name="Tischfield J.A."/>
            <person name="Kuperman S."/>
            <person name="Crowe R."/>
            <person name="Hesselbrock V."/>
            <person name="Schuckit M."/>
            <person name="Almasy L."/>
            <person name="Porjesz B."/>
            <person name="Edenberg H.J."/>
            <person name="Begleiter H."/>
            <person name="Meyerhof W."/>
            <person name="Bierut L.J."/>
            <person name="Goate A.M."/>
        </authorList>
    </citation>
    <scope>VARIANT LYS-172</scope>
    <scope>ASSOCIATION WITH SUSCEPTIBILITY TO ALCOHOLISM</scope>
</reference>
<dbReference type="EMBL" id="AF227139">
    <property type="protein sequence ID" value="AAF43912.1"/>
    <property type="molecule type" value="Genomic_DNA"/>
</dbReference>
<dbReference type="EMBL" id="AY724962">
    <property type="protein sequence ID" value="AAU21158.1"/>
    <property type="molecule type" value="Genomic_DNA"/>
</dbReference>
<dbReference type="EMBL" id="AC004838">
    <property type="protein sequence ID" value="AAP21892.1"/>
    <property type="molecule type" value="Genomic_DNA"/>
</dbReference>
<dbReference type="EMBL" id="CH236947">
    <property type="protein sequence ID" value="EAL24338.1"/>
    <property type="molecule type" value="Genomic_DNA"/>
</dbReference>
<dbReference type="EMBL" id="BC095524">
    <property type="protein sequence ID" value="AAH95524.1"/>
    <property type="molecule type" value="mRNA"/>
</dbReference>
<dbReference type="CCDS" id="CCDS5785.1"/>
<dbReference type="RefSeq" id="NP_058641.1">
    <property type="nucleotide sequence ID" value="NM_016945.3"/>
</dbReference>
<dbReference type="SMR" id="Q9NYV7"/>
<dbReference type="FunCoup" id="Q9NYV7">
    <property type="interactions" value="175"/>
</dbReference>
<dbReference type="STRING" id="9606.ENSP00000249284"/>
<dbReference type="BindingDB" id="Q9NYV7"/>
<dbReference type="ChEMBL" id="CHEMBL3309106"/>
<dbReference type="DrugBank" id="DB01032">
    <property type="generic name" value="Probenecid"/>
</dbReference>
<dbReference type="DrugCentral" id="Q9NYV7"/>
<dbReference type="GuidetoPHARMACOLOGY" id="669"/>
<dbReference type="GlyCosmos" id="Q9NYV7">
    <property type="glycosylation" value="2 sites, No reported glycans"/>
</dbReference>
<dbReference type="GlyGen" id="Q9NYV7">
    <property type="glycosylation" value="2 sites"/>
</dbReference>
<dbReference type="iPTMnet" id="Q9NYV7"/>
<dbReference type="PhosphoSitePlus" id="Q9NYV7"/>
<dbReference type="BioMuta" id="TAS2R16"/>
<dbReference type="DMDM" id="29839657"/>
<dbReference type="PaxDb" id="9606-ENSP00000249284"/>
<dbReference type="PeptideAtlas" id="Q9NYV7"/>
<dbReference type="Antibodypedia" id="31744">
    <property type="antibodies" value="62 antibodies from 16 providers"/>
</dbReference>
<dbReference type="DNASU" id="50833"/>
<dbReference type="Ensembl" id="ENST00000249284.3">
    <property type="protein sequence ID" value="ENSP00000249284.2"/>
    <property type="gene ID" value="ENSG00000128519.3"/>
</dbReference>
<dbReference type="GeneID" id="50833"/>
<dbReference type="KEGG" id="hsa:50833"/>
<dbReference type="MANE-Select" id="ENST00000249284.3">
    <property type="protein sequence ID" value="ENSP00000249284.2"/>
    <property type="RefSeq nucleotide sequence ID" value="NM_016945.3"/>
    <property type="RefSeq protein sequence ID" value="NP_058641.1"/>
</dbReference>
<dbReference type="UCSC" id="uc003vkl.2">
    <property type="organism name" value="human"/>
</dbReference>
<dbReference type="AGR" id="HGNC:14921"/>
<dbReference type="CTD" id="50833"/>
<dbReference type="DisGeNET" id="50833"/>
<dbReference type="GeneCards" id="TAS2R16"/>
<dbReference type="HGNC" id="HGNC:14921">
    <property type="gene designation" value="TAS2R16"/>
</dbReference>
<dbReference type="HPA" id="ENSG00000128519">
    <property type="expression patterns" value="Not detected"/>
</dbReference>
<dbReference type="MalaCards" id="TAS2R16"/>
<dbReference type="MIM" id="604867">
    <property type="type" value="gene"/>
</dbReference>
<dbReference type="MIM" id="617956">
    <property type="type" value="phenotype"/>
</dbReference>
<dbReference type="neXtProt" id="NX_Q9NYV7"/>
<dbReference type="OpenTargets" id="ENSG00000128519"/>
<dbReference type="PharmGKB" id="PA37931"/>
<dbReference type="VEuPathDB" id="HostDB:ENSG00000128519"/>
<dbReference type="eggNOG" id="ENOG502S2SI">
    <property type="taxonomic scope" value="Eukaryota"/>
</dbReference>
<dbReference type="GeneTree" id="ENSGT01100000263477"/>
<dbReference type="HOGENOM" id="CLU_072337_1_1_1"/>
<dbReference type="InParanoid" id="Q9NYV7"/>
<dbReference type="OMA" id="REWVQVK"/>
<dbReference type="OrthoDB" id="9834076at2759"/>
<dbReference type="PAN-GO" id="Q9NYV7">
    <property type="GO annotations" value="3 GO annotations based on evolutionary models"/>
</dbReference>
<dbReference type="PhylomeDB" id="Q9NYV7"/>
<dbReference type="TreeFam" id="TF335891"/>
<dbReference type="PathwayCommons" id="Q9NYV7"/>
<dbReference type="Reactome" id="R-HSA-418594">
    <property type="pathway name" value="G alpha (i) signalling events"/>
</dbReference>
<dbReference type="Reactome" id="R-HSA-420499">
    <property type="pathway name" value="Class C/3 (Metabotropic glutamate/pheromone receptors)"/>
</dbReference>
<dbReference type="Reactome" id="R-HSA-9717207">
    <property type="pathway name" value="Sensory perception of sweet, bitter, and umami (glutamate) taste"/>
</dbReference>
<dbReference type="BioGRID-ORCS" id="50833">
    <property type="hits" value="6 hits in 1141 CRISPR screens"/>
</dbReference>
<dbReference type="GeneWiki" id="TAS2R16"/>
<dbReference type="GenomeRNAi" id="50833"/>
<dbReference type="Pharos" id="Q9NYV7">
    <property type="development level" value="Tchem"/>
</dbReference>
<dbReference type="PRO" id="PR:Q9NYV7"/>
<dbReference type="Proteomes" id="UP000005640">
    <property type="component" value="Chromosome 7"/>
</dbReference>
<dbReference type="RNAct" id="Q9NYV7">
    <property type="molecule type" value="protein"/>
</dbReference>
<dbReference type="Bgee" id="ENSG00000128519">
    <property type="expression patterns" value="Expressed in tibialis anterior and 3 other cell types or tissues"/>
</dbReference>
<dbReference type="GO" id="GO:0005783">
    <property type="term" value="C:endoplasmic reticulum"/>
    <property type="evidence" value="ECO:0000314"/>
    <property type="project" value="HGNC-UCL"/>
</dbReference>
<dbReference type="GO" id="GO:0009897">
    <property type="term" value="C:external side of plasma membrane"/>
    <property type="evidence" value="ECO:0000314"/>
    <property type="project" value="HGNC-UCL"/>
</dbReference>
<dbReference type="GO" id="GO:0016020">
    <property type="term" value="C:membrane"/>
    <property type="evidence" value="ECO:0000318"/>
    <property type="project" value="GO_Central"/>
</dbReference>
<dbReference type="GO" id="GO:0005886">
    <property type="term" value="C:plasma membrane"/>
    <property type="evidence" value="ECO:0000304"/>
    <property type="project" value="Reactome"/>
</dbReference>
<dbReference type="GO" id="GO:0005802">
    <property type="term" value="C:trans-Golgi network"/>
    <property type="evidence" value="ECO:0000314"/>
    <property type="project" value="HGNC-UCL"/>
</dbReference>
<dbReference type="GO" id="GO:0033038">
    <property type="term" value="F:bitter taste receptor activity"/>
    <property type="evidence" value="ECO:0000314"/>
    <property type="project" value="UniProtKB"/>
</dbReference>
<dbReference type="GO" id="GO:0004930">
    <property type="term" value="F:G protein-coupled receptor activity"/>
    <property type="evidence" value="ECO:0007669"/>
    <property type="project" value="UniProtKB-KW"/>
</dbReference>
<dbReference type="GO" id="GO:0001580">
    <property type="term" value="P:detection of chemical stimulus involved in sensory perception of bitter taste"/>
    <property type="evidence" value="ECO:0000314"/>
    <property type="project" value="UniProtKB"/>
</dbReference>
<dbReference type="GO" id="GO:0007186">
    <property type="term" value="P:G protein-coupled receptor signaling pathway"/>
    <property type="evidence" value="ECO:0000305"/>
    <property type="project" value="BHF-UCL"/>
</dbReference>
<dbReference type="CDD" id="cd15017">
    <property type="entry name" value="7tm_TAS2R16"/>
    <property type="match status" value="1"/>
</dbReference>
<dbReference type="FunFam" id="1.20.1070.10:FF:000055">
    <property type="entry name" value="Taste receptor type 2"/>
    <property type="match status" value="1"/>
</dbReference>
<dbReference type="InterPro" id="IPR007960">
    <property type="entry name" value="TAS2R"/>
</dbReference>
<dbReference type="PANTHER" id="PTHR11394">
    <property type="entry name" value="TASTE RECEPTOR TYPE 2"/>
    <property type="match status" value="1"/>
</dbReference>
<dbReference type="PANTHER" id="PTHR11394:SF68">
    <property type="entry name" value="TASTE RECEPTOR TYPE 2 MEMBER 16"/>
    <property type="match status" value="1"/>
</dbReference>
<dbReference type="Pfam" id="PF05296">
    <property type="entry name" value="TAS2R"/>
    <property type="match status" value="1"/>
</dbReference>
<dbReference type="SUPFAM" id="SSF81321">
    <property type="entry name" value="Family A G protein-coupled receptor-like"/>
    <property type="match status" value="1"/>
</dbReference>
<evidence type="ECO:0000255" key="1"/>
<evidence type="ECO:0000269" key="2">
    <source>
    </source>
</evidence>
<evidence type="ECO:0000269" key="3">
    <source>
    </source>
</evidence>
<evidence type="ECO:0000269" key="4">
    <source>
    </source>
</evidence>
<evidence type="ECO:0000269" key="5">
    <source>
    </source>
</evidence>
<evidence type="ECO:0000269" key="6">
    <source>
    </source>
</evidence>
<evidence type="ECO:0000269" key="7">
    <source>
    </source>
</evidence>
<evidence type="ECO:0000269" key="8">
    <source>
    </source>
</evidence>
<evidence type="ECO:0000269" key="9">
    <source>
    </source>
</evidence>
<evidence type="ECO:0000305" key="10"/>
<sequence length="291" mass="33986">MIPIQLTVFFMIIYVLESLTIIVQSSLIVAVLGREWLQVRRLMPVDMILISLGISRFCLQWASMLNNFCSYFNLNYVLCNLTITWEFFNILTFWLNSLLTVFYCIKVSSFTHHIFLWLRWRILRLFPWILLGSLMITCVTIIPSAIGNYIQIQLLTMEHLPRNSTVTDKLENFHQYQFQAHTVALVIPFILFLASTIFLMASLTKQIQHHSTGHCNPSMKARFTALRSLAVLFIVFTSYFLTILITIIGTLFDKRCWLWVWEAFVYAFILMHSTSLMLSSPTLKRILKGKC</sequence>
<proteinExistence type="evidence at protein level"/>